<reference key="1">
    <citation type="journal article" date="2005" name="Science">
        <title>Genome streamlining in a cosmopolitan oceanic bacterium.</title>
        <authorList>
            <person name="Giovannoni S.J."/>
            <person name="Tripp H.J."/>
            <person name="Givan S."/>
            <person name="Podar M."/>
            <person name="Vergin K.L."/>
            <person name="Baptista D."/>
            <person name="Bibbs L."/>
            <person name="Eads J."/>
            <person name="Richardson T.H."/>
            <person name="Noordewier M."/>
            <person name="Rappe M.S."/>
            <person name="Short J.M."/>
            <person name="Carrington J.C."/>
            <person name="Mathur E.J."/>
        </authorList>
    </citation>
    <scope>NUCLEOTIDE SEQUENCE [LARGE SCALE GENOMIC DNA]</scope>
    <source>
        <strain>HTCC1062</strain>
    </source>
</reference>
<proteinExistence type="inferred from homology"/>
<gene>
    <name evidence="1" type="primary">lepA</name>
    <name type="ordered locus">SAR11_0444</name>
</gene>
<feature type="chain" id="PRO_0000224780" description="Elongation factor 4">
    <location>
        <begin position="1"/>
        <end position="602"/>
    </location>
</feature>
<feature type="domain" description="tr-type G">
    <location>
        <begin position="5"/>
        <end position="187"/>
    </location>
</feature>
<feature type="binding site" evidence="1">
    <location>
        <begin position="17"/>
        <end position="22"/>
    </location>
    <ligand>
        <name>GTP</name>
        <dbReference type="ChEBI" id="CHEBI:37565"/>
    </ligand>
</feature>
<feature type="binding site" evidence="1">
    <location>
        <begin position="134"/>
        <end position="137"/>
    </location>
    <ligand>
        <name>GTP</name>
        <dbReference type="ChEBI" id="CHEBI:37565"/>
    </ligand>
</feature>
<organism>
    <name type="scientific">Pelagibacter ubique (strain HTCC1062)</name>
    <dbReference type="NCBI Taxonomy" id="335992"/>
    <lineage>
        <taxon>Bacteria</taxon>
        <taxon>Pseudomonadati</taxon>
        <taxon>Pseudomonadota</taxon>
        <taxon>Alphaproteobacteria</taxon>
        <taxon>Candidatus Pelagibacterales</taxon>
        <taxon>Candidatus Pelagibacteraceae</taxon>
        <taxon>Candidatus Pelagibacter</taxon>
    </lineage>
</organism>
<evidence type="ECO:0000255" key="1">
    <source>
        <dbReference type="HAMAP-Rule" id="MF_00071"/>
    </source>
</evidence>
<keyword id="KW-0997">Cell inner membrane</keyword>
<keyword id="KW-1003">Cell membrane</keyword>
<keyword id="KW-0342">GTP-binding</keyword>
<keyword id="KW-0378">Hydrolase</keyword>
<keyword id="KW-0472">Membrane</keyword>
<keyword id="KW-0547">Nucleotide-binding</keyword>
<keyword id="KW-0648">Protein biosynthesis</keyword>
<keyword id="KW-1185">Reference proteome</keyword>
<dbReference type="EC" id="3.6.5.n1" evidence="1"/>
<dbReference type="EMBL" id="CP000084">
    <property type="protein sequence ID" value="AAZ21266.1"/>
    <property type="molecule type" value="Genomic_DNA"/>
</dbReference>
<dbReference type="SMR" id="Q4FNH3"/>
<dbReference type="STRING" id="335992.SAR11_0444"/>
<dbReference type="KEGG" id="pub:SAR11_0444"/>
<dbReference type="eggNOG" id="COG0481">
    <property type="taxonomic scope" value="Bacteria"/>
</dbReference>
<dbReference type="HOGENOM" id="CLU_009995_3_3_5"/>
<dbReference type="OrthoDB" id="9802948at2"/>
<dbReference type="Proteomes" id="UP000002528">
    <property type="component" value="Chromosome"/>
</dbReference>
<dbReference type="GO" id="GO:0005886">
    <property type="term" value="C:plasma membrane"/>
    <property type="evidence" value="ECO:0007669"/>
    <property type="project" value="UniProtKB-SubCell"/>
</dbReference>
<dbReference type="GO" id="GO:0005525">
    <property type="term" value="F:GTP binding"/>
    <property type="evidence" value="ECO:0007669"/>
    <property type="project" value="UniProtKB-UniRule"/>
</dbReference>
<dbReference type="GO" id="GO:0003924">
    <property type="term" value="F:GTPase activity"/>
    <property type="evidence" value="ECO:0007669"/>
    <property type="project" value="UniProtKB-UniRule"/>
</dbReference>
<dbReference type="GO" id="GO:0097216">
    <property type="term" value="F:guanosine tetraphosphate binding"/>
    <property type="evidence" value="ECO:0007669"/>
    <property type="project" value="UniProtKB-ARBA"/>
</dbReference>
<dbReference type="GO" id="GO:0043022">
    <property type="term" value="F:ribosome binding"/>
    <property type="evidence" value="ECO:0007669"/>
    <property type="project" value="UniProtKB-UniRule"/>
</dbReference>
<dbReference type="GO" id="GO:0003746">
    <property type="term" value="F:translation elongation factor activity"/>
    <property type="evidence" value="ECO:0007669"/>
    <property type="project" value="UniProtKB-UniRule"/>
</dbReference>
<dbReference type="GO" id="GO:0045727">
    <property type="term" value="P:positive regulation of translation"/>
    <property type="evidence" value="ECO:0007669"/>
    <property type="project" value="UniProtKB-UniRule"/>
</dbReference>
<dbReference type="CDD" id="cd03699">
    <property type="entry name" value="EF4_II"/>
    <property type="match status" value="1"/>
</dbReference>
<dbReference type="CDD" id="cd16260">
    <property type="entry name" value="EF4_III"/>
    <property type="match status" value="1"/>
</dbReference>
<dbReference type="CDD" id="cd01890">
    <property type="entry name" value="LepA"/>
    <property type="match status" value="1"/>
</dbReference>
<dbReference type="CDD" id="cd03709">
    <property type="entry name" value="lepA_C"/>
    <property type="match status" value="1"/>
</dbReference>
<dbReference type="FunFam" id="3.40.50.300:FF:000078">
    <property type="entry name" value="Elongation factor 4"/>
    <property type="match status" value="1"/>
</dbReference>
<dbReference type="FunFam" id="2.40.30.10:FF:000015">
    <property type="entry name" value="Translation factor GUF1, mitochondrial"/>
    <property type="match status" value="1"/>
</dbReference>
<dbReference type="FunFam" id="3.30.70.240:FF:000007">
    <property type="entry name" value="Translation factor GUF1, mitochondrial"/>
    <property type="match status" value="1"/>
</dbReference>
<dbReference type="FunFam" id="3.30.70.2570:FF:000001">
    <property type="entry name" value="Translation factor GUF1, mitochondrial"/>
    <property type="match status" value="1"/>
</dbReference>
<dbReference type="FunFam" id="3.30.70.870:FF:000004">
    <property type="entry name" value="Translation factor GUF1, mitochondrial"/>
    <property type="match status" value="1"/>
</dbReference>
<dbReference type="Gene3D" id="3.30.70.240">
    <property type="match status" value="1"/>
</dbReference>
<dbReference type="Gene3D" id="3.30.70.2570">
    <property type="entry name" value="Elongation factor 4, C-terminal domain"/>
    <property type="match status" value="1"/>
</dbReference>
<dbReference type="Gene3D" id="3.30.70.870">
    <property type="entry name" value="Elongation Factor G (Translational Gtpase), domain 3"/>
    <property type="match status" value="1"/>
</dbReference>
<dbReference type="Gene3D" id="3.40.50.300">
    <property type="entry name" value="P-loop containing nucleotide triphosphate hydrolases"/>
    <property type="match status" value="1"/>
</dbReference>
<dbReference type="Gene3D" id="2.40.30.10">
    <property type="entry name" value="Translation factors"/>
    <property type="match status" value="1"/>
</dbReference>
<dbReference type="HAMAP" id="MF_00071">
    <property type="entry name" value="LepA"/>
    <property type="match status" value="1"/>
</dbReference>
<dbReference type="InterPro" id="IPR006297">
    <property type="entry name" value="EF-4"/>
</dbReference>
<dbReference type="InterPro" id="IPR041095">
    <property type="entry name" value="EFG_II"/>
</dbReference>
<dbReference type="InterPro" id="IPR035647">
    <property type="entry name" value="EFG_III/V"/>
</dbReference>
<dbReference type="InterPro" id="IPR000640">
    <property type="entry name" value="EFG_V-like"/>
</dbReference>
<dbReference type="InterPro" id="IPR004161">
    <property type="entry name" value="EFTu-like_2"/>
</dbReference>
<dbReference type="InterPro" id="IPR031157">
    <property type="entry name" value="G_TR_CS"/>
</dbReference>
<dbReference type="InterPro" id="IPR038363">
    <property type="entry name" value="LepA_C_sf"/>
</dbReference>
<dbReference type="InterPro" id="IPR013842">
    <property type="entry name" value="LepA_CTD"/>
</dbReference>
<dbReference type="InterPro" id="IPR035654">
    <property type="entry name" value="LepA_IV"/>
</dbReference>
<dbReference type="InterPro" id="IPR027417">
    <property type="entry name" value="P-loop_NTPase"/>
</dbReference>
<dbReference type="InterPro" id="IPR005225">
    <property type="entry name" value="Small_GTP-bd"/>
</dbReference>
<dbReference type="InterPro" id="IPR000795">
    <property type="entry name" value="T_Tr_GTP-bd_dom"/>
</dbReference>
<dbReference type="InterPro" id="IPR009000">
    <property type="entry name" value="Transl_B-barrel_sf"/>
</dbReference>
<dbReference type="NCBIfam" id="TIGR01393">
    <property type="entry name" value="lepA"/>
    <property type="match status" value="1"/>
</dbReference>
<dbReference type="NCBIfam" id="TIGR00231">
    <property type="entry name" value="small_GTP"/>
    <property type="match status" value="1"/>
</dbReference>
<dbReference type="PANTHER" id="PTHR43512:SF4">
    <property type="entry name" value="TRANSLATION FACTOR GUF1 HOMOLOG, CHLOROPLASTIC"/>
    <property type="match status" value="1"/>
</dbReference>
<dbReference type="PANTHER" id="PTHR43512">
    <property type="entry name" value="TRANSLATION FACTOR GUF1-RELATED"/>
    <property type="match status" value="1"/>
</dbReference>
<dbReference type="Pfam" id="PF00679">
    <property type="entry name" value="EFG_C"/>
    <property type="match status" value="1"/>
</dbReference>
<dbReference type="Pfam" id="PF14492">
    <property type="entry name" value="EFG_III"/>
    <property type="match status" value="1"/>
</dbReference>
<dbReference type="Pfam" id="PF00009">
    <property type="entry name" value="GTP_EFTU"/>
    <property type="match status" value="1"/>
</dbReference>
<dbReference type="Pfam" id="PF03144">
    <property type="entry name" value="GTP_EFTU_D2"/>
    <property type="match status" value="1"/>
</dbReference>
<dbReference type="Pfam" id="PF06421">
    <property type="entry name" value="LepA_C"/>
    <property type="match status" value="1"/>
</dbReference>
<dbReference type="PRINTS" id="PR00315">
    <property type="entry name" value="ELONGATNFCT"/>
</dbReference>
<dbReference type="SMART" id="SM00838">
    <property type="entry name" value="EFG_C"/>
    <property type="match status" value="1"/>
</dbReference>
<dbReference type="SUPFAM" id="SSF54980">
    <property type="entry name" value="EF-G C-terminal domain-like"/>
    <property type="match status" value="2"/>
</dbReference>
<dbReference type="SUPFAM" id="SSF52540">
    <property type="entry name" value="P-loop containing nucleoside triphosphate hydrolases"/>
    <property type="match status" value="1"/>
</dbReference>
<dbReference type="SUPFAM" id="SSF50447">
    <property type="entry name" value="Translation proteins"/>
    <property type="match status" value="1"/>
</dbReference>
<dbReference type="PROSITE" id="PS00301">
    <property type="entry name" value="G_TR_1"/>
    <property type="match status" value="1"/>
</dbReference>
<dbReference type="PROSITE" id="PS51722">
    <property type="entry name" value="G_TR_2"/>
    <property type="match status" value="1"/>
</dbReference>
<comment type="function">
    <text evidence="1">Required for accurate and efficient protein synthesis under certain stress conditions. May act as a fidelity factor of the translation reaction, by catalyzing a one-codon backward translocation of tRNAs on improperly translocated ribosomes. Back-translocation proceeds from a post-translocation (POST) complex to a pre-translocation (PRE) complex, thus giving elongation factor G a second chance to translocate the tRNAs correctly. Binds to ribosomes in a GTP-dependent manner.</text>
</comment>
<comment type="catalytic activity">
    <reaction evidence="1">
        <text>GTP + H2O = GDP + phosphate + H(+)</text>
        <dbReference type="Rhea" id="RHEA:19669"/>
        <dbReference type="ChEBI" id="CHEBI:15377"/>
        <dbReference type="ChEBI" id="CHEBI:15378"/>
        <dbReference type="ChEBI" id="CHEBI:37565"/>
        <dbReference type="ChEBI" id="CHEBI:43474"/>
        <dbReference type="ChEBI" id="CHEBI:58189"/>
        <dbReference type="EC" id="3.6.5.n1"/>
    </reaction>
</comment>
<comment type="subcellular location">
    <subcellularLocation>
        <location evidence="1">Cell inner membrane</location>
        <topology evidence="1">Peripheral membrane protein</topology>
        <orientation evidence="1">Cytoplasmic side</orientation>
    </subcellularLocation>
</comment>
<comment type="similarity">
    <text evidence="1">Belongs to the TRAFAC class translation factor GTPase superfamily. Classic translation factor GTPase family. LepA subfamily.</text>
</comment>
<sequence length="602" mass="66719">MTKIDHIRNFAIIAHIDHGKSTIADRIIHSCGGLTEREMKAQVLDSMDIERERGITIKAQTVKLNYKAKDGKDYILNIIDTPGHVDFSYEVSRSLYACEGSILIVDSTQGVEAQTLANVYQALDTKHEIVPVLNKVDLPASDLEKTKKQIEEVIGIDTENAIPCSGKTGEGIEDILEQIIVSLPAPEGEKDADLKCLLVDSWYDTYLGVVILVRVINGKISKNMKIKMMSTDQEYIIEKVGVFTPKATDVNELNAGEIGFITTGIKILSETKVGDTICDATKPPQEALPGFKPSKPVVFCGLFPVDSSEYQKLKDGLGKLQLNDASFSYEAESSSALGLGFRCGFLGLLHLEIITERLEREFDINLLTTTPGVVYKVHMNKGDIIELQNPSSLPEPTLIKFIEEPWIKATIITPDQYLGAIIKVCQDKRGVQTNLSYSGNRAVLNYEIPLNEVVFDFNDRLKSMTSGYASFDYEIIGHREGDLVKLGILVNAEPVDALSMMVHKDFAQTVGREVCEKLKDLIPRHNFMIPVQAAIGGKIIARETIKGFKKDVLTKIHGGGARDRKRKLLDKQKKGKARGKQFGKVEIPQEAFIGVLKINKDQ</sequence>
<protein>
    <recommendedName>
        <fullName evidence="1">Elongation factor 4</fullName>
        <shortName evidence="1">EF-4</shortName>
        <ecNumber evidence="1">3.6.5.n1</ecNumber>
    </recommendedName>
    <alternativeName>
        <fullName evidence="1">Ribosomal back-translocase LepA</fullName>
    </alternativeName>
</protein>
<name>LEPA_PELUB</name>
<accession>Q4FNH3</accession>